<protein>
    <recommendedName>
        <fullName evidence="1">tRNA N6-adenosine threonylcarbamoyltransferase</fullName>
        <ecNumber evidence="1">2.3.1.234</ecNumber>
    </recommendedName>
    <alternativeName>
        <fullName evidence="1">N6-L-threonylcarbamoyladenine synthase</fullName>
        <shortName evidence="1">t(6)A synthase</shortName>
    </alternativeName>
    <alternativeName>
        <fullName evidence="1">t(6)A37 threonylcarbamoyladenosine biosynthesis protein TsaD</fullName>
    </alternativeName>
    <alternativeName>
        <fullName evidence="1">tRNA threonylcarbamoyladenosine biosynthesis protein TsaD</fullName>
    </alternativeName>
</protein>
<dbReference type="EC" id="2.3.1.234" evidence="1"/>
<dbReference type="EMBL" id="CP000316">
    <property type="protein sequence ID" value="ABE45179.1"/>
    <property type="molecule type" value="Genomic_DNA"/>
</dbReference>
<dbReference type="RefSeq" id="WP_011484174.1">
    <property type="nucleotide sequence ID" value="NC_007948.1"/>
</dbReference>
<dbReference type="SMR" id="Q127W3"/>
<dbReference type="STRING" id="296591.Bpro_3265"/>
<dbReference type="KEGG" id="pol:Bpro_3265"/>
<dbReference type="eggNOG" id="COG0533">
    <property type="taxonomic scope" value="Bacteria"/>
</dbReference>
<dbReference type="HOGENOM" id="CLU_023208_0_2_4"/>
<dbReference type="OrthoDB" id="9806197at2"/>
<dbReference type="Proteomes" id="UP000001983">
    <property type="component" value="Chromosome"/>
</dbReference>
<dbReference type="GO" id="GO:0005737">
    <property type="term" value="C:cytoplasm"/>
    <property type="evidence" value="ECO:0007669"/>
    <property type="project" value="UniProtKB-SubCell"/>
</dbReference>
<dbReference type="GO" id="GO:0005506">
    <property type="term" value="F:iron ion binding"/>
    <property type="evidence" value="ECO:0007669"/>
    <property type="project" value="UniProtKB-UniRule"/>
</dbReference>
<dbReference type="GO" id="GO:0061711">
    <property type="term" value="F:N(6)-L-threonylcarbamoyladenine synthase activity"/>
    <property type="evidence" value="ECO:0007669"/>
    <property type="project" value="UniProtKB-EC"/>
</dbReference>
<dbReference type="GO" id="GO:0002949">
    <property type="term" value="P:tRNA threonylcarbamoyladenosine modification"/>
    <property type="evidence" value="ECO:0007669"/>
    <property type="project" value="UniProtKB-UniRule"/>
</dbReference>
<dbReference type="CDD" id="cd24133">
    <property type="entry name" value="ASKHA_NBD_TsaD_bac"/>
    <property type="match status" value="1"/>
</dbReference>
<dbReference type="FunFam" id="3.30.420.40:FF:000012">
    <property type="entry name" value="tRNA N6-adenosine threonylcarbamoyltransferase"/>
    <property type="match status" value="1"/>
</dbReference>
<dbReference type="FunFam" id="3.30.420.40:FF:000040">
    <property type="entry name" value="tRNA N6-adenosine threonylcarbamoyltransferase"/>
    <property type="match status" value="1"/>
</dbReference>
<dbReference type="Gene3D" id="3.30.420.40">
    <property type="match status" value="2"/>
</dbReference>
<dbReference type="HAMAP" id="MF_01445">
    <property type="entry name" value="TsaD"/>
    <property type="match status" value="1"/>
</dbReference>
<dbReference type="InterPro" id="IPR043129">
    <property type="entry name" value="ATPase_NBD"/>
</dbReference>
<dbReference type="InterPro" id="IPR000905">
    <property type="entry name" value="Gcp-like_dom"/>
</dbReference>
<dbReference type="InterPro" id="IPR017861">
    <property type="entry name" value="KAE1/TsaD"/>
</dbReference>
<dbReference type="InterPro" id="IPR017860">
    <property type="entry name" value="Peptidase_M22_CS"/>
</dbReference>
<dbReference type="InterPro" id="IPR022450">
    <property type="entry name" value="TsaD"/>
</dbReference>
<dbReference type="NCBIfam" id="TIGR00329">
    <property type="entry name" value="gcp_kae1"/>
    <property type="match status" value="1"/>
</dbReference>
<dbReference type="NCBIfam" id="TIGR03723">
    <property type="entry name" value="T6A_TsaD_YgjD"/>
    <property type="match status" value="1"/>
</dbReference>
<dbReference type="PANTHER" id="PTHR11735">
    <property type="entry name" value="TRNA N6-ADENOSINE THREONYLCARBAMOYLTRANSFERASE"/>
    <property type="match status" value="1"/>
</dbReference>
<dbReference type="PANTHER" id="PTHR11735:SF6">
    <property type="entry name" value="TRNA N6-ADENOSINE THREONYLCARBAMOYLTRANSFERASE, MITOCHONDRIAL"/>
    <property type="match status" value="1"/>
</dbReference>
<dbReference type="Pfam" id="PF00814">
    <property type="entry name" value="TsaD"/>
    <property type="match status" value="1"/>
</dbReference>
<dbReference type="PRINTS" id="PR00789">
    <property type="entry name" value="OSIALOPTASE"/>
</dbReference>
<dbReference type="SUPFAM" id="SSF53067">
    <property type="entry name" value="Actin-like ATPase domain"/>
    <property type="match status" value="2"/>
</dbReference>
<dbReference type="PROSITE" id="PS01016">
    <property type="entry name" value="GLYCOPROTEASE"/>
    <property type="match status" value="1"/>
</dbReference>
<keyword id="KW-0012">Acyltransferase</keyword>
<keyword id="KW-0963">Cytoplasm</keyword>
<keyword id="KW-0408">Iron</keyword>
<keyword id="KW-0479">Metal-binding</keyword>
<keyword id="KW-1185">Reference proteome</keyword>
<keyword id="KW-0808">Transferase</keyword>
<keyword id="KW-0819">tRNA processing</keyword>
<evidence type="ECO:0000255" key="1">
    <source>
        <dbReference type="HAMAP-Rule" id="MF_01445"/>
    </source>
</evidence>
<sequence length="347" mass="36318">MLVLGIESSCDETGVALVDAGGSEVPRLLSHALFSQIQMHQAYGGVVPELASRDHIRRVLPLTRQVMAQAGRSLAQVDVVAYTRGPGLAGALLVGAGVACALAAALGKPVMGVHHLEGHLLSPFLSADPPVFPFVALLVSGGHTQLMRVDRVGSYELLGETIDDAAGEAFDKSAKLMGLPYPGGPHLADLARQGDGTAFKLPRPLLHSGDLDFSFAGLKTAVLTQAKKLGPELENRKADLAAATQAAIVDVLVKKSLAAMAQTGLKRLVVAGGVGANALLRSQLNAACQQRGIRVHYPELHLCTDNGAMIALAAGMRLQAGLETLQRGYTFDVKPRWSLTPTVARSA</sequence>
<proteinExistence type="inferred from homology"/>
<feature type="chain" id="PRO_0000303475" description="tRNA N6-adenosine threonylcarbamoyltransferase">
    <location>
        <begin position="1"/>
        <end position="347"/>
    </location>
</feature>
<feature type="binding site" evidence="1">
    <location>
        <position position="115"/>
    </location>
    <ligand>
        <name>Fe cation</name>
        <dbReference type="ChEBI" id="CHEBI:24875"/>
    </ligand>
</feature>
<feature type="binding site" evidence="1">
    <location>
        <position position="119"/>
    </location>
    <ligand>
        <name>Fe cation</name>
        <dbReference type="ChEBI" id="CHEBI:24875"/>
    </ligand>
</feature>
<feature type="binding site" evidence="1">
    <location>
        <begin position="138"/>
        <end position="142"/>
    </location>
    <ligand>
        <name>substrate</name>
    </ligand>
</feature>
<feature type="binding site" evidence="1">
    <location>
        <position position="171"/>
    </location>
    <ligand>
        <name>substrate</name>
    </ligand>
</feature>
<feature type="binding site" evidence="1">
    <location>
        <position position="184"/>
    </location>
    <ligand>
        <name>substrate</name>
    </ligand>
</feature>
<feature type="binding site" evidence="1">
    <location>
        <position position="277"/>
    </location>
    <ligand>
        <name>substrate</name>
    </ligand>
</feature>
<feature type="binding site" evidence="1">
    <location>
        <position position="305"/>
    </location>
    <ligand>
        <name>Fe cation</name>
        <dbReference type="ChEBI" id="CHEBI:24875"/>
    </ligand>
</feature>
<gene>
    <name evidence="1" type="primary">tsaD</name>
    <name type="synonym">gcp</name>
    <name type="ordered locus">Bpro_3265</name>
</gene>
<accession>Q127W3</accession>
<organism>
    <name type="scientific">Polaromonas sp. (strain JS666 / ATCC BAA-500)</name>
    <dbReference type="NCBI Taxonomy" id="296591"/>
    <lineage>
        <taxon>Bacteria</taxon>
        <taxon>Pseudomonadati</taxon>
        <taxon>Pseudomonadota</taxon>
        <taxon>Betaproteobacteria</taxon>
        <taxon>Burkholderiales</taxon>
        <taxon>Comamonadaceae</taxon>
        <taxon>Polaromonas</taxon>
    </lineage>
</organism>
<comment type="function">
    <text evidence="1">Required for the formation of a threonylcarbamoyl group on adenosine at position 37 (t(6)A37) in tRNAs that read codons beginning with adenine. Is involved in the transfer of the threonylcarbamoyl moiety of threonylcarbamoyl-AMP (TC-AMP) to the N6 group of A37, together with TsaE and TsaB. TsaD likely plays a direct catalytic role in this reaction.</text>
</comment>
<comment type="catalytic activity">
    <reaction evidence="1">
        <text>L-threonylcarbamoyladenylate + adenosine(37) in tRNA = N(6)-L-threonylcarbamoyladenosine(37) in tRNA + AMP + H(+)</text>
        <dbReference type="Rhea" id="RHEA:37059"/>
        <dbReference type="Rhea" id="RHEA-COMP:10162"/>
        <dbReference type="Rhea" id="RHEA-COMP:10163"/>
        <dbReference type="ChEBI" id="CHEBI:15378"/>
        <dbReference type="ChEBI" id="CHEBI:73682"/>
        <dbReference type="ChEBI" id="CHEBI:74411"/>
        <dbReference type="ChEBI" id="CHEBI:74418"/>
        <dbReference type="ChEBI" id="CHEBI:456215"/>
        <dbReference type="EC" id="2.3.1.234"/>
    </reaction>
</comment>
<comment type="cofactor">
    <cofactor evidence="1">
        <name>Fe(2+)</name>
        <dbReference type="ChEBI" id="CHEBI:29033"/>
    </cofactor>
    <text evidence="1">Binds 1 Fe(2+) ion per subunit.</text>
</comment>
<comment type="subcellular location">
    <subcellularLocation>
        <location evidence="1">Cytoplasm</location>
    </subcellularLocation>
</comment>
<comment type="similarity">
    <text evidence="1">Belongs to the KAE1 / TsaD family.</text>
</comment>
<name>TSAD_POLSJ</name>
<reference key="1">
    <citation type="journal article" date="2008" name="Appl. Environ. Microbiol.">
        <title>The genome of Polaromonas sp. strain JS666: insights into the evolution of a hydrocarbon- and xenobiotic-degrading bacterium, and features of relevance to biotechnology.</title>
        <authorList>
            <person name="Mattes T.E."/>
            <person name="Alexander A.K."/>
            <person name="Richardson P.M."/>
            <person name="Munk A.C."/>
            <person name="Han C.S."/>
            <person name="Stothard P."/>
            <person name="Coleman N.V."/>
        </authorList>
    </citation>
    <scope>NUCLEOTIDE SEQUENCE [LARGE SCALE GENOMIC DNA]</scope>
    <source>
        <strain>JS666 / ATCC BAA-500</strain>
    </source>
</reference>